<feature type="chain" id="PRO_0000285935" description="DNA topoisomerase 1">
    <location>
        <begin position="1"/>
        <end position="689"/>
    </location>
</feature>
<feature type="domain" description="Toprim" evidence="1">
    <location>
        <begin position="3"/>
        <end position="113"/>
    </location>
</feature>
<feature type="domain" description="Topo IA-type catalytic" evidence="2">
    <location>
        <begin position="129"/>
        <end position="557"/>
    </location>
</feature>
<feature type="zinc finger region" description="C4-type 1">
    <location>
        <begin position="577"/>
        <end position="603"/>
    </location>
</feature>
<feature type="zinc finger region" description="C4-type 2">
    <location>
        <begin position="617"/>
        <end position="645"/>
    </location>
</feature>
<feature type="zinc finger region" description="C4-type 3">
    <location>
        <begin position="658"/>
        <end position="681"/>
    </location>
</feature>
<feature type="region of interest" description="Interaction with DNA" evidence="1">
    <location>
        <begin position="163"/>
        <end position="168"/>
    </location>
</feature>
<feature type="region of interest" description="Disordered" evidence="3">
    <location>
        <begin position="328"/>
        <end position="357"/>
    </location>
</feature>
<feature type="active site" description="O-(5'-phospho-DNA)-tyrosine intermediate" evidence="2">
    <location>
        <position position="298"/>
    </location>
</feature>
<feature type="binding site" evidence="1">
    <location>
        <position position="9"/>
    </location>
    <ligand>
        <name>Mg(2+)</name>
        <dbReference type="ChEBI" id="CHEBI:18420"/>
        <note>catalytic</note>
    </ligand>
</feature>
<feature type="binding site" evidence="1">
    <location>
        <position position="82"/>
    </location>
    <ligand>
        <name>Mg(2+)</name>
        <dbReference type="ChEBI" id="CHEBI:18420"/>
        <note>catalytic</note>
    </ligand>
</feature>
<feature type="site" description="Interaction with DNA" evidence="1">
    <location>
        <position position="33"/>
    </location>
</feature>
<feature type="site" description="Interaction with DNA" evidence="1">
    <location>
        <position position="139"/>
    </location>
</feature>
<feature type="site" description="Interaction with DNA" evidence="1">
    <location>
        <position position="140"/>
    </location>
</feature>
<feature type="site" description="Interaction with DNA" evidence="1">
    <location>
        <position position="143"/>
    </location>
</feature>
<feature type="site" description="Interaction with DNA" evidence="1">
    <location>
        <position position="148"/>
    </location>
</feature>
<feature type="site" description="Interaction with DNA" evidence="1">
    <location>
        <position position="155"/>
    </location>
</feature>
<feature type="site" description="Interaction with DNA" evidence="1">
    <location>
        <position position="300"/>
    </location>
</feature>
<feature type="site" description="Interaction with DNA" evidence="1">
    <location>
        <position position="488"/>
    </location>
</feature>
<dbReference type="EC" id="5.6.2.1" evidence="1"/>
<dbReference type="EMBL" id="AJ938182">
    <property type="protein sequence ID" value="CAI80801.1"/>
    <property type="status" value="ALT_INIT"/>
    <property type="molecule type" value="Genomic_DNA"/>
</dbReference>
<dbReference type="SMR" id="Q2YXL8"/>
<dbReference type="KEGG" id="sab:SAB1112"/>
<dbReference type="HOGENOM" id="CLU_002929_4_3_9"/>
<dbReference type="GO" id="GO:0005694">
    <property type="term" value="C:chromosome"/>
    <property type="evidence" value="ECO:0007669"/>
    <property type="project" value="InterPro"/>
</dbReference>
<dbReference type="GO" id="GO:0003677">
    <property type="term" value="F:DNA binding"/>
    <property type="evidence" value="ECO:0007669"/>
    <property type="project" value="UniProtKB-KW"/>
</dbReference>
<dbReference type="GO" id="GO:0003917">
    <property type="term" value="F:DNA topoisomerase type I (single strand cut, ATP-independent) activity"/>
    <property type="evidence" value="ECO:0007669"/>
    <property type="project" value="UniProtKB-UniRule"/>
</dbReference>
<dbReference type="GO" id="GO:0008270">
    <property type="term" value="F:zinc ion binding"/>
    <property type="evidence" value="ECO:0007669"/>
    <property type="project" value="UniProtKB-KW"/>
</dbReference>
<dbReference type="GO" id="GO:0006265">
    <property type="term" value="P:DNA topological change"/>
    <property type="evidence" value="ECO:0007669"/>
    <property type="project" value="UniProtKB-UniRule"/>
</dbReference>
<dbReference type="CDD" id="cd00186">
    <property type="entry name" value="TOP1Ac"/>
    <property type="match status" value="1"/>
</dbReference>
<dbReference type="CDD" id="cd03363">
    <property type="entry name" value="TOPRIM_TopoIA_TopoI"/>
    <property type="match status" value="1"/>
</dbReference>
<dbReference type="Gene3D" id="3.40.50.140">
    <property type="match status" value="1"/>
</dbReference>
<dbReference type="Gene3D" id="3.30.65.10">
    <property type="entry name" value="Bacterial Topoisomerase I, domain 1"/>
    <property type="match status" value="2"/>
</dbReference>
<dbReference type="Gene3D" id="1.10.460.10">
    <property type="entry name" value="Topoisomerase I, domain 2"/>
    <property type="match status" value="1"/>
</dbReference>
<dbReference type="Gene3D" id="2.70.20.10">
    <property type="entry name" value="Topoisomerase I, domain 3"/>
    <property type="match status" value="1"/>
</dbReference>
<dbReference type="Gene3D" id="1.10.290.10">
    <property type="entry name" value="Topoisomerase I, domain 4"/>
    <property type="match status" value="1"/>
</dbReference>
<dbReference type="HAMAP" id="MF_00952">
    <property type="entry name" value="Topoisom_1_prok"/>
    <property type="match status" value="1"/>
</dbReference>
<dbReference type="InterPro" id="IPR000380">
    <property type="entry name" value="Topo_IA"/>
</dbReference>
<dbReference type="InterPro" id="IPR003601">
    <property type="entry name" value="Topo_IA_2"/>
</dbReference>
<dbReference type="InterPro" id="IPR023406">
    <property type="entry name" value="Topo_IA_AS"/>
</dbReference>
<dbReference type="InterPro" id="IPR013497">
    <property type="entry name" value="Topo_IA_cen"/>
</dbReference>
<dbReference type="InterPro" id="IPR013824">
    <property type="entry name" value="Topo_IA_cen_sub1"/>
</dbReference>
<dbReference type="InterPro" id="IPR013825">
    <property type="entry name" value="Topo_IA_cen_sub2"/>
</dbReference>
<dbReference type="InterPro" id="IPR013826">
    <property type="entry name" value="Topo_IA_cen_sub3"/>
</dbReference>
<dbReference type="InterPro" id="IPR023405">
    <property type="entry name" value="Topo_IA_core_domain"/>
</dbReference>
<dbReference type="InterPro" id="IPR003602">
    <property type="entry name" value="Topo_IA_DNA-bd_dom"/>
</dbReference>
<dbReference type="InterPro" id="IPR013498">
    <property type="entry name" value="Topo_IA_Znf"/>
</dbReference>
<dbReference type="InterPro" id="IPR005733">
    <property type="entry name" value="TopoI_bac-type"/>
</dbReference>
<dbReference type="InterPro" id="IPR028612">
    <property type="entry name" value="Topoisom_1_IA"/>
</dbReference>
<dbReference type="InterPro" id="IPR006171">
    <property type="entry name" value="TOPRIM_dom"/>
</dbReference>
<dbReference type="InterPro" id="IPR034149">
    <property type="entry name" value="TOPRIM_TopoI"/>
</dbReference>
<dbReference type="NCBIfam" id="TIGR01051">
    <property type="entry name" value="topA_bact"/>
    <property type="match status" value="1"/>
</dbReference>
<dbReference type="PANTHER" id="PTHR42785:SF1">
    <property type="entry name" value="DNA TOPOISOMERASE"/>
    <property type="match status" value="1"/>
</dbReference>
<dbReference type="PANTHER" id="PTHR42785">
    <property type="entry name" value="DNA TOPOISOMERASE, TYPE IA, CORE"/>
    <property type="match status" value="1"/>
</dbReference>
<dbReference type="Pfam" id="PF01131">
    <property type="entry name" value="Topoisom_bac"/>
    <property type="match status" value="1"/>
</dbReference>
<dbReference type="Pfam" id="PF01751">
    <property type="entry name" value="Toprim"/>
    <property type="match status" value="1"/>
</dbReference>
<dbReference type="Pfam" id="PF01396">
    <property type="entry name" value="Zn_ribbon_Top1"/>
    <property type="match status" value="3"/>
</dbReference>
<dbReference type="PRINTS" id="PR00417">
    <property type="entry name" value="PRTPISMRASEI"/>
</dbReference>
<dbReference type="SMART" id="SM00437">
    <property type="entry name" value="TOP1Ac"/>
    <property type="match status" value="1"/>
</dbReference>
<dbReference type="SMART" id="SM00436">
    <property type="entry name" value="TOP1Bc"/>
    <property type="match status" value="1"/>
</dbReference>
<dbReference type="SMART" id="SM00493">
    <property type="entry name" value="TOPRIM"/>
    <property type="match status" value="1"/>
</dbReference>
<dbReference type="SUPFAM" id="SSF56712">
    <property type="entry name" value="Prokaryotic type I DNA topoisomerase"/>
    <property type="match status" value="1"/>
</dbReference>
<dbReference type="PROSITE" id="PS00396">
    <property type="entry name" value="TOPO_IA_1"/>
    <property type="match status" value="1"/>
</dbReference>
<dbReference type="PROSITE" id="PS52039">
    <property type="entry name" value="TOPO_IA_2"/>
    <property type="match status" value="1"/>
</dbReference>
<dbReference type="PROSITE" id="PS50880">
    <property type="entry name" value="TOPRIM"/>
    <property type="match status" value="1"/>
</dbReference>
<sequence>MADNLVIVESPAKAKTIEKYLGKKYKVIASMGHVRDLPRSQMGVDTEDNYEPKYITIRGKGPVVKELKKHAKKAKNVFLASDPDREGEAIAWHLSKILELEDSKENRVVFNEITKDAVKESFKNPREIEMNLVDAQQARRILDRLVGYNISPVLWKKVKKGLSAGRVQSVALRLVIDRENEIRNFKPEEYWIIEGEFRYKKSKFNAKFLHYKNKPFKLKTKKDIEKITAALDGDQFEITNVTKKEKTRNPANPFTTSTLQQEAARKLNFKARKTMMVAQQLYEGIDLKKQGTIGLITYMRTDSTRISDTAKAEAKQYITDKYGESYTSKRKASGKQGDQDAHEAIRPSSTMRTPDDMKSFLTKDQYRLYKLIWERFVASQMAPAILDTVSLDITQGDIKFRANGQTIKFKGFMTLYVETKDDIDSEKENKLPKLEQGDKVTATQIEPAQHYTQPPPRYTEARLVKTLEELKIGRPSTYAPTIDTIQKRNYVKLESKRFVPTELGEIVHEQVKEYFPEIIDVEFTVNMETLLDKIAEGDITWRKVIDGFFSSFKQDVERAEEEMEKIEIKDEPAGEDCEVCGSPMVIKMGRYGKFMACSNFPDCRNTKAIVKSIGVKCPKCNDGDVVERKSKKNRVFYGCSKYPECDFISWDKPIGRDCPKCNQYLVENKKGKTTQVICSNCDYKEAAQK</sequence>
<evidence type="ECO:0000255" key="1">
    <source>
        <dbReference type="HAMAP-Rule" id="MF_00952"/>
    </source>
</evidence>
<evidence type="ECO:0000255" key="2">
    <source>
        <dbReference type="PROSITE-ProRule" id="PRU01383"/>
    </source>
</evidence>
<evidence type="ECO:0000256" key="3">
    <source>
        <dbReference type="SAM" id="MobiDB-lite"/>
    </source>
</evidence>
<evidence type="ECO:0000305" key="4"/>
<organism>
    <name type="scientific">Staphylococcus aureus (strain bovine RF122 / ET3-1)</name>
    <dbReference type="NCBI Taxonomy" id="273036"/>
    <lineage>
        <taxon>Bacteria</taxon>
        <taxon>Bacillati</taxon>
        <taxon>Bacillota</taxon>
        <taxon>Bacilli</taxon>
        <taxon>Bacillales</taxon>
        <taxon>Staphylococcaceae</taxon>
        <taxon>Staphylococcus</taxon>
    </lineage>
</organism>
<protein>
    <recommendedName>
        <fullName evidence="1">DNA topoisomerase 1</fullName>
        <ecNumber evidence="1">5.6.2.1</ecNumber>
    </recommendedName>
    <alternativeName>
        <fullName evidence="1">DNA topoisomerase I</fullName>
    </alternativeName>
    <alternativeName>
        <fullName>Omega-protein</fullName>
    </alternativeName>
    <alternativeName>
        <fullName>Relaxing enzyme</fullName>
    </alternativeName>
    <alternativeName>
        <fullName>Swivelase</fullName>
    </alternativeName>
    <alternativeName>
        <fullName>Untwisting enzyme</fullName>
    </alternativeName>
</protein>
<accession>Q2YXL8</accession>
<gene>
    <name evidence="1" type="primary">topA</name>
    <name type="ordered locus">SAB1112</name>
</gene>
<comment type="function">
    <text evidence="1">Releases the supercoiling and torsional tension of DNA, which is introduced during the DNA replication and transcription, by transiently cleaving and rejoining one strand of the DNA duplex. Introduces a single-strand break via transesterification at a target site in duplex DNA. The scissile phosphodiester is attacked by the catalytic tyrosine of the enzyme, resulting in the formation of a DNA-(5'-phosphotyrosyl)-enzyme intermediate and the expulsion of a 3'-OH DNA strand. The free DNA strand then undergoes passage around the unbroken strand, thus removing DNA supercoils. Finally, in the religation step, the DNA 3'-OH attacks the covalent intermediate to expel the active-site tyrosine and restore the DNA phosphodiester backbone.</text>
</comment>
<comment type="catalytic activity">
    <reaction evidence="1">
        <text>ATP-independent breakage of single-stranded DNA, followed by passage and rejoining.</text>
        <dbReference type="EC" id="5.6.2.1"/>
    </reaction>
</comment>
<comment type="cofactor">
    <cofactor evidence="1">
        <name>Mg(2+)</name>
        <dbReference type="ChEBI" id="CHEBI:18420"/>
    </cofactor>
</comment>
<comment type="subunit">
    <text evidence="1">Monomer.</text>
</comment>
<comment type="similarity">
    <text evidence="1">Belongs to the type IA topoisomerase family.</text>
</comment>
<comment type="sequence caution" evidence="4">
    <conflict type="erroneous initiation">
        <sequence resource="EMBL-CDS" id="CAI80801"/>
    </conflict>
</comment>
<name>TOP1_STAAB</name>
<proteinExistence type="inferred from homology"/>
<reference key="1">
    <citation type="journal article" date="2007" name="PLoS ONE">
        <title>Molecular correlates of host specialization in Staphylococcus aureus.</title>
        <authorList>
            <person name="Herron-Olson L."/>
            <person name="Fitzgerald J.R."/>
            <person name="Musser J.M."/>
            <person name="Kapur V."/>
        </authorList>
    </citation>
    <scope>NUCLEOTIDE SEQUENCE [LARGE SCALE GENOMIC DNA]</scope>
    <source>
        <strain>bovine RF122 / ET3-1</strain>
    </source>
</reference>
<keyword id="KW-0238">DNA-binding</keyword>
<keyword id="KW-0413">Isomerase</keyword>
<keyword id="KW-0460">Magnesium</keyword>
<keyword id="KW-0479">Metal-binding</keyword>
<keyword id="KW-0677">Repeat</keyword>
<keyword id="KW-0799">Topoisomerase</keyword>
<keyword id="KW-0862">Zinc</keyword>
<keyword id="KW-0863">Zinc-finger</keyword>